<gene>
    <name type="primary">NPT1</name>
    <name type="ordered locus">YOR209C</name>
</gene>
<keyword id="KW-0002">3D-structure</keyword>
<keyword id="KW-0963">Cytoplasm</keyword>
<keyword id="KW-0436">Ligase</keyword>
<keyword id="KW-0539">Nucleus</keyword>
<keyword id="KW-0597">Phosphoprotein</keyword>
<keyword id="KW-0662">Pyridine nucleotide biosynthesis</keyword>
<keyword id="KW-1185">Reference proteome</keyword>
<keyword id="KW-0808">Transferase</keyword>
<proteinExistence type="evidence at protein level"/>
<accession>P39683</accession>
<accession>D6W2R5</accession>
<accession>Q08626</accession>
<name>NPT1_YEAST</name>
<protein>
    <recommendedName>
        <fullName>Nicotinate phosphoribosyltransferase</fullName>
        <shortName>NAPRTase</shortName>
        <ecNumber evidence="6">6.3.4.21</ecNumber>
    </recommendedName>
</protein>
<dbReference type="EC" id="6.3.4.21" evidence="6"/>
<dbReference type="EMBL" id="Z36878">
    <property type="protein sequence ID" value="CAA85352.1"/>
    <property type="molecule type" value="Genomic_DNA"/>
</dbReference>
<dbReference type="EMBL" id="Z75117">
    <property type="protein sequence ID" value="CAA99424.1"/>
    <property type="molecule type" value="Genomic_DNA"/>
</dbReference>
<dbReference type="EMBL" id="L11274">
    <property type="protein sequence ID" value="AAB59317.1"/>
    <property type="molecule type" value="Genomic_DNA"/>
</dbReference>
<dbReference type="EMBL" id="BK006948">
    <property type="protein sequence ID" value="DAA10981.1"/>
    <property type="molecule type" value="Genomic_DNA"/>
</dbReference>
<dbReference type="PIR" id="S67101">
    <property type="entry name" value="S67101"/>
</dbReference>
<dbReference type="RefSeq" id="NP_014852.1">
    <property type="nucleotide sequence ID" value="NM_001183628.1"/>
</dbReference>
<dbReference type="PDB" id="1VLP">
    <property type="method" value="X-ray"/>
    <property type="resolution" value="1.75 A"/>
    <property type="chains" value="A/B/C/D=1-429"/>
</dbReference>
<dbReference type="PDBsum" id="1VLP"/>
<dbReference type="SMR" id="P39683"/>
<dbReference type="BioGRID" id="34604">
    <property type="interactions" value="213"/>
</dbReference>
<dbReference type="DIP" id="DIP-4984N"/>
<dbReference type="FunCoup" id="P39683">
    <property type="interactions" value="272"/>
</dbReference>
<dbReference type="IntAct" id="P39683">
    <property type="interactions" value="9"/>
</dbReference>
<dbReference type="MINT" id="P39683"/>
<dbReference type="STRING" id="4932.YOR209C"/>
<dbReference type="iPTMnet" id="P39683"/>
<dbReference type="PaxDb" id="4932-YOR209C"/>
<dbReference type="PeptideAtlas" id="P39683"/>
<dbReference type="EnsemblFungi" id="YOR209C_mRNA">
    <property type="protein sequence ID" value="YOR209C"/>
    <property type="gene ID" value="YOR209C"/>
</dbReference>
<dbReference type="GeneID" id="854384"/>
<dbReference type="KEGG" id="sce:YOR209C"/>
<dbReference type="AGR" id="SGD:S000005735"/>
<dbReference type="SGD" id="S000005735">
    <property type="gene designation" value="NPT1"/>
</dbReference>
<dbReference type="VEuPathDB" id="FungiDB:YOR209C"/>
<dbReference type="eggNOG" id="KOG2511">
    <property type="taxonomic scope" value="Eukaryota"/>
</dbReference>
<dbReference type="GeneTree" id="ENSGT00940000153456"/>
<dbReference type="HOGENOM" id="CLU_030991_0_0_1"/>
<dbReference type="InParanoid" id="P39683"/>
<dbReference type="OMA" id="IEHCLEY"/>
<dbReference type="OrthoDB" id="193380at2759"/>
<dbReference type="BioCyc" id="YEAST:YOR209C-MONOMER"/>
<dbReference type="BRENDA" id="6.3.4.21">
    <property type="organism ID" value="984"/>
</dbReference>
<dbReference type="Reactome" id="R-SCE-197264">
    <property type="pathway name" value="Nicotinamide salvaging"/>
</dbReference>
<dbReference type="Reactome" id="R-SCE-6798695">
    <property type="pathway name" value="Neutrophil degranulation"/>
</dbReference>
<dbReference type="UniPathway" id="UPA00253">
    <property type="reaction ID" value="UER00457"/>
</dbReference>
<dbReference type="BioGRID-ORCS" id="854384">
    <property type="hits" value="0 hits in 10 CRISPR screens"/>
</dbReference>
<dbReference type="EvolutionaryTrace" id="P39683"/>
<dbReference type="PRO" id="PR:P39683"/>
<dbReference type="Proteomes" id="UP000002311">
    <property type="component" value="Chromosome XV"/>
</dbReference>
<dbReference type="RNAct" id="P39683">
    <property type="molecule type" value="protein"/>
</dbReference>
<dbReference type="GO" id="GO:0000781">
    <property type="term" value="C:chromosome, telomeric region"/>
    <property type="evidence" value="ECO:0007669"/>
    <property type="project" value="GOC"/>
</dbReference>
<dbReference type="GO" id="GO:0005829">
    <property type="term" value="C:cytosol"/>
    <property type="evidence" value="ECO:0000318"/>
    <property type="project" value="GO_Central"/>
</dbReference>
<dbReference type="GO" id="GO:0005634">
    <property type="term" value="C:nucleus"/>
    <property type="evidence" value="ECO:0000314"/>
    <property type="project" value="SGD"/>
</dbReference>
<dbReference type="GO" id="GO:0004516">
    <property type="term" value="F:nicotinate phosphoribosyltransferase activity"/>
    <property type="evidence" value="ECO:0000314"/>
    <property type="project" value="SGD"/>
</dbReference>
<dbReference type="GO" id="GO:0016740">
    <property type="term" value="F:transferase activity"/>
    <property type="evidence" value="ECO:0007669"/>
    <property type="project" value="UniProtKB-KW"/>
</dbReference>
<dbReference type="GO" id="GO:0034355">
    <property type="term" value="P:NAD biosynthetic process via the salvage pathway"/>
    <property type="evidence" value="ECO:0000318"/>
    <property type="project" value="GO_Central"/>
</dbReference>
<dbReference type="GO" id="GO:0019358">
    <property type="term" value="P:nicotinate nucleotide salvage"/>
    <property type="evidence" value="ECO:0000314"/>
    <property type="project" value="SGD"/>
</dbReference>
<dbReference type="GO" id="GO:0000183">
    <property type="term" value="P:rDNA heterochromatin formation"/>
    <property type="evidence" value="ECO:0000315"/>
    <property type="project" value="SGD"/>
</dbReference>
<dbReference type="GO" id="GO:0031509">
    <property type="term" value="P:subtelomeric heterochromatin formation"/>
    <property type="evidence" value="ECO:0000315"/>
    <property type="project" value="SGD"/>
</dbReference>
<dbReference type="CDD" id="cd01401">
    <property type="entry name" value="PncB_like"/>
    <property type="match status" value="1"/>
</dbReference>
<dbReference type="FunFam" id="3.20.140.10:FF:000009">
    <property type="entry name" value="Nicotinate phosphoribosyltransferase"/>
    <property type="match status" value="1"/>
</dbReference>
<dbReference type="Gene3D" id="3.20.140.10">
    <property type="entry name" value="nicotinate phosphoribosyltransferase"/>
    <property type="match status" value="1"/>
</dbReference>
<dbReference type="InterPro" id="IPR041525">
    <property type="entry name" value="N/Namide_PRibTrfase"/>
</dbReference>
<dbReference type="InterPro" id="IPR040727">
    <property type="entry name" value="NAPRTase_N"/>
</dbReference>
<dbReference type="InterPro" id="IPR006406">
    <property type="entry name" value="Nic_PRibTrfase"/>
</dbReference>
<dbReference type="InterPro" id="IPR007229">
    <property type="entry name" value="Nic_PRibTrfase-Fam"/>
</dbReference>
<dbReference type="InterPro" id="IPR036068">
    <property type="entry name" value="Nicotinate_pribotase-like_C"/>
</dbReference>
<dbReference type="NCBIfam" id="TIGR01514">
    <property type="entry name" value="NAPRTase"/>
    <property type="match status" value="1"/>
</dbReference>
<dbReference type="PANTHER" id="PTHR11098">
    <property type="entry name" value="NICOTINATE PHOSPHORIBOSYLTRANSFERASE"/>
    <property type="match status" value="1"/>
</dbReference>
<dbReference type="PANTHER" id="PTHR11098:SF1">
    <property type="entry name" value="NICOTINATE PHOSPHORIBOSYLTRANSFERASE"/>
    <property type="match status" value="1"/>
</dbReference>
<dbReference type="Pfam" id="PF04095">
    <property type="entry name" value="NAPRTase"/>
    <property type="match status" value="1"/>
</dbReference>
<dbReference type="Pfam" id="PF17767">
    <property type="entry name" value="NAPRTase_N"/>
    <property type="match status" value="1"/>
</dbReference>
<dbReference type="PIRSF" id="PIRSF000484">
    <property type="entry name" value="NAPRT"/>
    <property type="match status" value="1"/>
</dbReference>
<dbReference type="SUPFAM" id="SSF51690">
    <property type="entry name" value="Nicotinate/Quinolinate PRTase C-terminal domain-like"/>
    <property type="match status" value="1"/>
</dbReference>
<dbReference type="SUPFAM" id="SSF54675">
    <property type="entry name" value="Nicotinate/Quinolinate PRTase N-terminal domain-like"/>
    <property type="match status" value="1"/>
</dbReference>
<feature type="chain" id="PRO_0000205862" description="Nicotinate phosphoribosyltransferase">
    <location>
        <begin position="1"/>
        <end position="429"/>
    </location>
</feature>
<feature type="binding site" evidence="2">
    <location>
        <position position="15"/>
    </location>
    <ligand>
        <name>nicotinate</name>
        <dbReference type="ChEBI" id="CHEBI:32544"/>
    </ligand>
</feature>
<feature type="binding site" evidence="2">
    <location>
        <position position="177"/>
    </location>
    <ligand>
        <name>nicotinate</name>
        <dbReference type="ChEBI" id="CHEBI:32544"/>
    </ligand>
</feature>
<feature type="binding site" evidence="2">
    <location>
        <position position="229"/>
    </location>
    <ligand>
        <name>nicotinate</name>
        <dbReference type="ChEBI" id="CHEBI:32544"/>
    </ligand>
</feature>
<feature type="binding site" evidence="2">
    <location>
        <position position="294"/>
    </location>
    <ligand>
        <name>nicotinate</name>
        <dbReference type="ChEBI" id="CHEBI:32544"/>
    </ligand>
</feature>
<feature type="binding site" evidence="9">
    <location>
        <position position="355"/>
    </location>
    <ligand>
        <name>5-phospho-alpha-D-ribose 1-diphosphate</name>
        <dbReference type="ChEBI" id="CHEBI:58017"/>
    </ligand>
</feature>
<feature type="modified residue" description="Phosphohistidine; by autocatalysis" evidence="1">
    <location>
        <position position="232"/>
    </location>
</feature>
<feature type="sequence conflict" description="In Ref. 1; CAA85352." evidence="7" ref="1">
    <original>YEIPLLS</original>
    <variation>MRSLTV</variation>
    <location>
        <begin position="131"/>
        <end position="137"/>
    </location>
</feature>
<feature type="sequence conflict" description="In Ref. 1." evidence="7" ref="1">
    <original>FKFVDIDWDYENQLE</original>
    <variation>LIVTSTGLRNHR</variation>
    <location>
        <begin position="144"/>
        <end position="158"/>
    </location>
</feature>
<feature type="sequence conflict" description="In Ref. 1; CAA85352." evidence="7" ref="1">
    <original>SEF</original>
    <variation>RIH</variation>
    <location>
        <begin position="175"/>
        <end position="177"/>
    </location>
</feature>
<feature type="sequence conflict" description="In Ref. 1; CAA85352." evidence="7" ref="1">
    <original>E</original>
    <variation>EL</variation>
    <location>
        <position position="243"/>
    </location>
</feature>
<feature type="strand" evidence="11">
    <location>
        <begin position="11"/>
        <end position="13"/>
    </location>
</feature>
<feature type="helix" evidence="11">
    <location>
        <begin position="14"/>
        <end position="26"/>
    </location>
</feature>
<feature type="strand" evidence="11">
    <location>
        <begin position="31"/>
        <end position="39"/>
    </location>
</feature>
<feature type="helix" evidence="11">
    <location>
        <begin position="47"/>
        <end position="59"/>
    </location>
</feature>
<feature type="helix" evidence="11">
    <location>
        <begin position="60"/>
        <end position="62"/>
    </location>
</feature>
<feature type="helix" evidence="11">
    <location>
        <begin position="67"/>
        <end position="76"/>
    </location>
</feature>
<feature type="helix" evidence="11">
    <location>
        <begin position="82"/>
        <end position="89"/>
    </location>
</feature>
<feature type="helix" evidence="11">
    <location>
        <begin position="97"/>
        <end position="100"/>
    </location>
</feature>
<feature type="strand" evidence="11">
    <location>
        <begin position="101"/>
        <end position="108"/>
    </location>
</feature>
<feature type="strand" evidence="11">
    <location>
        <begin position="111"/>
        <end position="124"/>
    </location>
</feature>
<feature type="helix" evidence="11">
    <location>
        <begin position="125"/>
        <end position="128"/>
    </location>
</feature>
<feature type="helix" evidence="11">
    <location>
        <begin position="132"/>
        <end position="146"/>
    </location>
</feature>
<feature type="helix" evidence="11">
    <location>
        <begin position="156"/>
        <end position="169"/>
    </location>
</feature>
<feature type="strand" evidence="11">
    <location>
        <begin position="174"/>
        <end position="176"/>
    </location>
</feature>
<feature type="helix" evidence="11">
    <location>
        <begin position="185"/>
        <end position="201"/>
    </location>
</feature>
<feature type="helix" evidence="11">
    <location>
        <begin position="203"/>
        <end position="206"/>
    </location>
</feature>
<feature type="turn" evidence="11">
    <location>
        <begin position="207"/>
        <end position="209"/>
    </location>
</feature>
<feature type="strand" evidence="11">
    <location>
        <begin position="210"/>
        <end position="215"/>
    </location>
</feature>
<feature type="helix" evidence="11">
    <location>
        <begin position="216"/>
        <end position="222"/>
    </location>
</feature>
<feature type="helix" evidence="11">
    <location>
        <begin position="232"/>
        <end position="242"/>
    </location>
</feature>
<feature type="helix" evidence="11">
    <location>
        <begin position="248"/>
        <end position="260"/>
    </location>
</feature>
<feature type="helix" evidence="11">
    <location>
        <begin position="262"/>
        <end position="264"/>
    </location>
</feature>
<feature type="strand" evidence="11">
    <location>
        <begin position="267"/>
        <end position="269"/>
    </location>
</feature>
<feature type="helix" evidence="11">
    <location>
        <begin position="275"/>
        <end position="279"/>
    </location>
</feature>
<feature type="helix" evidence="11">
    <location>
        <begin position="286"/>
        <end position="289"/>
    </location>
</feature>
<feature type="strand" evidence="11">
    <location>
        <begin position="292"/>
        <end position="295"/>
    </location>
</feature>
<feature type="helix" evidence="11">
    <location>
        <begin position="300"/>
        <end position="312"/>
    </location>
</feature>
<feature type="strand" evidence="11">
    <location>
        <begin position="321"/>
        <end position="326"/>
    </location>
</feature>
<feature type="helix" evidence="11">
    <location>
        <begin position="332"/>
        <end position="344"/>
    </location>
</feature>
<feature type="strand" evidence="11">
    <location>
        <begin position="348"/>
        <end position="353"/>
    </location>
</feature>
<feature type="helix" evidence="11">
    <location>
        <begin position="355"/>
        <end position="358"/>
    </location>
</feature>
<feature type="strand" evidence="11">
    <location>
        <begin position="364"/>
        <end position="366"/>
    </location>
</feature>
<feature type="strand" evidence="11">
    <location>
        <begin position="369"/>
        <end position="371"/>
    </location>
</feature>
<feature type="strand" evidence="11">
    <location>
        <begin position="376"/>
        <end position="383"/>
    </location>
</feature>
<feature type="helix" evidence="11">
    <location>
        <begin position="402"/>
        <end position="411"/>
    </location>
</feature>
<evidence type="ECO:0000250" key="1">
    <source>
        <dbReference type="UniProtKB" id="P22253"/>
    </source>
</evidence>
<evidence type="ECO:0000250" key="2">
    <source>
        <dbReference type="UniProtKB" id="Q9HJ28"/>
    </source>
</evidence>
<evidence type="ECO:0000269" key="3">
    <source>
    </source>
</evidence>
<evidence type="ECO:0000269" key="4">
    <source>
    </source>
</evidence>
<evidence type="ECO:0000269" key="5">
    <source>
    </source>
</evidence>
<evidence type="ECO:0000269" key="6">
    <source>
    </source>
</evidence>
<evidence type="ECO:0000305" key="7"/>
<evidence type="ECO:0000305" key="8">
    <source>
    </source>
</evidence>
<evidence type="ECO:0000305" key="9">
    <source>
    </source>
</evidence>
<evidence type="ECO:0007744" key="10">
    <source>
        <dbReference type="PDB" id="1VLP"/>
    </source>
</evidence>
<evidence type="ECO:0007829" key="11">
    <source>
        <dbReference type="PDB" id="1VLP"/>
    </source>
</evidence>
<organism>
    <name type="scientific">Saccharomyces cerevisiae (strain ATCC 204508 / S288c)</name>
    <name type="common">Baker's yeast</name>
    <dbReference type="NCBI Taxonomy" id="559292"/>
    <lineage>
        <taxon>Eukaryota</taxon>
        <taxon>Fungi</taxon>
        <taxon>Dikarya</taxon>
        <taxon>Ascomycota</taxon>
        <taxon>Saccharomycotina</taxon>
        <taxon>Saccharomycetes</taxon>
        <taxon>Saccharomycetales</taxon>
        <taxon>Saccharomycetaceae</taxon>
        <taxon>Saccharomyces</taxon>
    </lineage>
</organism>
<comment type="function">
    <text evidence="3 6">Catalyzes the first step in the biosynthesis of NAD from nicotinic acid, the ATP-dependent synthesis of beta-nicotinate D-ribonucleotide from nicotinate and 5-phospho-D-ribose 1-phosphate (PubMed:9521740). Essential for growth under anaerobic conditions (PubMed:12062417).</text>
</comment>
<comment type="catalytic activity">
    <reaction evidence="6">
        <text>nicotinate + 5-phospho-alpha-D-ribose 1-diphosphate + ATP + H2O = nicotinate beta-D-ribonucleotide + ADP + phosphate + diphosphate</text>
        <dbReference type="Rhea" id="RHEA:36163"/>
        <dbReference type="ChEBI" id="CHEBI:15377"/>
        <dbReference type="ChEBI" id="CHEBI:30616"/>
        <dbReference type="ChEBI" id="CHEBI:32544"/>
        <dbReference type="ChEBI" id="CHEBI:33019"/>
        <dbReference type="ChEBI" id="CHEBI:43474"/>
        <dbReference type="ChEBI" id="CHEBI:57502"/>
        <dbReference type="ChEBI" id="CHEBI:58017"/>
        <dbReference type="ChEBI" id="CHEBI:456216"/>
        <dbReference type="EC" id="6.3.4.21"/>
    </reaction>
</comment>
<comment type="pathway">
    <text evidence="6 8">Cofactor biosynthesis; NAD(+) biosynthesis; nicotinate D-ribonucleotide from nicotinate: step 1/1.</text>
</comment>
<comment type="interaction">
    <interactant intactId="EBI-12218">
        <id>P39683</id>
    </interactant>
    <interactant intactId="EBI-701">
        <id>P33203</id>
        <label>PRP40</label>
    </interactant>
    <organismsDiffer>false</organismsDiffer>
    <experiments>2</experiments>
</comment>
<comment type="interaction">
    <interactant intactId="EBI-12218">
        <id>P39683</id>
    </interactant>
    <interactant intactId="EBI-16219">
        <id>P39940</id>
        <label>RSP5</label>
    </interactant>
    <organismsDiffer>false</organismsDiffer>
    <experiments>2</experiments>
</comment>
<comment type="subcellular location">
    <subcellularLocation>
        <location evidence="4">Cytoplasm</location>
    </subcellularLocation>
    <subcellularLocation>
        <location evidence="4">Nucleus</location>
    </subcellularLocation>
</comment>
<comment type="PTM">
    <text evidence="1 6">Transiently phosphorylated on a His residue during the reaction cycle (By similarity). Phosphorylation strongly increases the affinity for substrates and increases the rate of nicotinate D-ribonucleotide production (PubMed:9521740). Dephosphorylation regenerates the low-affinity form of the enzyme, leading to product release (By similarity).</text>
</comment>
<comment type="miscellaneous">
    <text evidence="5">Present with 32100 molecules/cell in log phase SD medium.</text>
</comment>
<comment type="similarity">
    <text evidence="7">Belongs to the NAPRTase family.</text>
</comment>
<sequence>MSEPVIKSLLDTDMYKITMHAAVFTNFPDVTVTYKYTNRSSQLTFNKEAINWLKEQFSYLGNLRFTEEEIEYLKQEIPYLPSAYIKYISSSNYKLHPEEQISFTSEEIEGKPTHYKLKILVSGSWKDTILYEIPLLSLISEAYFKFVDIDWDYENQLEQAEKKAETLFDNGIRFSEFGTRRRRSLKAQDLIMQGIMKAVNGNPDRNKSLLLGTSNILFAKKYGVKPIGTVAHEWVMGVASISEDYLHANKNAMDCWINTFGAKNAGLALTDTFGTDDFLKSFRPPYSDAYVGVRQDSGDPVEYTKKISHHYHDVLKLPKFSKIICYSDSLNVEKAITYSHAAKENGMLATFGIGTNFTNDFRKKSEPQVKSEPLNIVIKLLEVNGNHAIKISDNLGKNMGDPATVKRVKEELGYTERSWSGDNEAHRWT</sequence>
<reference key="1">
    <citation type="submission" date="1995-01" db="EMBL/GenBank/DDBJ databases">
        <title>The BRF1-STE4 region chromosome XV contains eleven genes: two of them define distinct RNA polymerase subunits and one encodes a putative nicotinate phosphoribosyl transferase.</title>
        <authorList>
            <person name="Lalo D."/>
            <person name="Doira C."/>
            <person name="Thuriaux P."/>
        </authorList>
    </citation>
    <scope>NUCLEOTIDE SEQUENCE [GENOMIC DNA]</scope>
    <source>
        <strain>ATCC 28383 / FL100 / VTT C-80102</strain>
    </source>
</reference>
<reference key="2">
    <citation type="journal article" date="1997" name="Nature">
        <title>The nucleotide sequence of Saccharomyces cerevisiae chromosome XV.</title>
        <authorList>
            <person name="Dujon B."/>
            <person name="Albermann K."/>
            <person name="Aldea M."/>
            <person name="Alexandraki D."/>
            <person name="Ansorge W."/>
            <person name="Arino J."/>
            <person name="Benes V."/>
            <person name="Bohn C."/>
            <person name="Bolotin-Fukuhara M."/>
            <person name="Bordonne R."/>
            <person name="Boyer J."/>
            <person name="Camasses A."/>
            <person name="Casamayor A."/>
            <person name="Casas C."/>
            <person name="Cheret G."/>
            <person name="Cziepluch C."/>
            <person name="Daignan-Fornier B."/>
            <person name="Dang V.-D."/>
            <person name="de Haan M."/>
            <person name="Delius H."/>
            <person name="Durand P."/>
            <person name="Fairhead C."/>
            <person name="Feldmann H."/>
            <person name="Gaillon L."/>
            <person name="Galisson F."/>
            <person name="Gamo F.-J."/>
            <person name="Gancedo C."/>
            <person name="Goffeau A."/>
            <person name="Goulding S.E."/>
            <person name="Grivell L.A."/>
            <person name="Habbig B."/>
            <person name="Hand N.J."/>
            <person name="Hani J."/>
            <person name="Hattenhorst U."/>
            <person name="Hebling U."/>
            <person name="Hernando Y."/>
            <person name="Herrero E."/>
            <person name="Heumann K."/>
            <person name="Hiesel R."/>
            <person name="Hilger F."/>
            <person name="Hofmann B."/>
            <person name="Hollenberg C.P."/>
            <person name="Hughes B."/>
            <person name="Jauniaux J.-C."/>
            <person name="Kalogeropoulos A."/>
            <person name="Katsoulou C."/>
            <person name="Kordes E."/>
            <person name="Lafuente M.J."/>
            <person name="Landt O."/>
            <person name="Louis E.J."/>
            <person name="Maarse A.C."/>
            <person name="Madania A."/>
            <person name="Mannhaupt G."/>
            <person name="Marck C."/>
            <person name="Martin R.P."/>
            <person name="Mewes H.-W."/>
            <person name="Michaux G."/>
            <person name="Paces V."/>
            <person name="Parle-McDermott A.G."/>
            <person name="Pearson B.M."/>
            <person name="Perrin A."/>
            <person name="Pettersson B."/>
            <person name="Poch O."/>
            <person name="Pohl T.M."/>
            <person name="Poirey R."/>
            <person name="Portetelle D."/>
            <person name="Pujol A."/>
            <person name="Purnelle B."/>
            <person name="Ramezani Rad M."/>
            <person name="Rechmann S."/>
            <person name="Schwager C."/>
            <person name="Schweizer M."/>
            <person name="Sor F."/>
            <person name="Sterky F."/>
            <person name="Tarassov I.A."/>
            <person name="Teodoru C."/>
            <person name="Tettelin H."/>
            <person name="Thierry A."/>
            <person name="Tobiasch E."/>
            <person name="Tzermia M."/>
            <person name="Uhlen M."/>
            <person name="Unseld M."/>
            <person name="Valens M."/>
            <person name="Vandenbol M."/>
            <person name="Vetter I."/>
            <person name="Vlcek C."/>
            <person name="Voet M."/>
            <person name="Volckaert G."/>
            <person name="Voss H."/>
            <person name="Wambutt R."/>
            <person name="Wedler H."/>
            <person name="Wiemann S."/>
            <person name="Winsor B."/>
            <person name="Wolfe K.H."/>
            <person name="Zollner A."/>
            <person name="Zumstein E."/>
            <person name="Kleine K."/>
        </authorList>
    </citation>
    <scope>NUCLEOTIDE SEQUENCE [LARGE SCALE GENOMIC DNA]</scope>
    <source>
        <strain>ATCC 204508 / S288c</strain>
    </source>
</reference>
<reference key="3">
    <citation type="journal article" date="2014" name="G3 (Bethesda)">
        <title>The reference genome sequence of Saccharomyces cerevisiae: Then and now.</title>
        <authorList>
            <person name="Engel S.R."/>
            <person name="Dietrich F.S."/>
            <person name="Fisk D.G."/>
            <person name="Binkley G."/>
            <person name="Balakrishnan R."/>
            <person name="Costanzo M.C."/>
            <person name="Dwight S.S."/>
            <person name="Hitz B.C."/>
            <person name="Karra K."/>
            <person name="Nash R.S."/>
            <person name="Weng S."/>
            <person name="Wong E.D."/>
            <person name="Lloyd P."/>
            <person name="Skrzypek M.S."/>
            <person name="Miyasato S.R."/>
            <person name="Simison M."/>
            <person name="Cherry J.M."/>
        </authorList>
    </citation>
    <scope>GENOME REANNOTATION</scope>
    <source>
        <strain>ATCC 204508 / S288c</strain>
    </source>
</reference>
<reference key="4">
    <citation type="journal article" date="1993" name="Proc. Natl. Acad. Sci. U.S.A.">
        <title>Interactions between three common subunits of yeast RNA polymerases I and III.</title>
        <authorList>
            <person name="Lalo D."/>
            <person name="Carles C."/>
            <person name="Sentenac A."/>
            <person name="Thuriaux P."/>
        </authorList>
    </citation>
    <scope>NUCLEOTIDE SEQUENCE [GENOMIC DNA] OF 1-43</scope>
    <source>
        <strain>ATCC 28383 / FL100 / VTT C-80102</strain>
    </source>
</reference>
<reference key="5">
    <citation type="journal article" date="1998" name="Biochemistry">
        <title>Conversion of a cosubstrate to an inhibitor: phosphorylation mutants of nicotinic acid phosphoribosyltransferase.</title>
        <authorList>
            <person name="Rajavel M."/>
            <person name="Lalo D."/>
            <person name="Gross J.W."/>
            <person name="Grubmeyer C."/>
        </authorList>
    </citation>
    <scope>FUNCTION</scope>
    <scope>CATALYTIC ACTIVITY</scope>
    <scope>PATHWAY</scope>
    <scope>PHOSPHORYLATION</scope>
</reference>
<reference key="6">
    <citation type="journal article" date="2002" name="FEBS Lett.">
        <title>Aerobic and anaerobic NAD+ metabolism in Saccharomyces cerevisiae.</title>
        <authorList>
            <person name="Panozzo C."/>
            <person name="Nawara M."/>
            <person name="Suski C."/>
            <person name="Kucharczyka R."/>
            <person name="Skoneczny M."/>
            <person name="Becam A.-M."/>
            <person name="Rytka J."/>
            <person name="Herbert C.J."/>
        </authorList>
    </citation>
    <scope>FUNCTION</scope>
    <scope>PATHWAY</scope>
</reference>
<reference key="7">
    <citation type="journal article" date="2003" name="Nature">
        <title>Global analysis of protein localization in budding yeast.</title>
        <authorList>
            <person name="Huh W.-K."/>
            <person name="Falvo J.V."/>
            <person name="Gerke L.C."/>
            <person name="Carroll A.S."/>
            <person name="Howson R.W."/>
            <person name="Weissman J.S."/>
            <person name="O'Shea E.K."/>
        </authorList>
    </citation>
    <scope>SUBCELLULAR LOCATION [LARGE SCALE ANALYSIS]</scope>
</reference>
<reference key="8">
    <citation type="journal article" date="2003" name="Nature">
        <title>Global analysis of protein expression in yeast.</title>
        <authorList>
            <person name="Ghaemmaghami S."/>
            <person name="Huh W.-K."/>
            <person name="Bower K."/>
            <person name="Howson R.W."/>
            <person name="Belle A."/>
            <person name="Dephoure N."/>
            <person name="O'Shea E.K."/>
            <person name="Weissman J.S."/>
        </authorList>
    </citation>
    <scope>LEVEL OF PROTEIN EXPRESSION [LARGE SCALE ANALYSIS]</scope>
</reference>
<reference evidence="10" key="9">
    <citation type="journal article" date="2005" name="Structure">
        <title>The structure of a eukaryotic nicotinic acid phosphoribosyltransferase reveals structural heterogeneity among type II PRTases.</title>
        <authorList>
            <person name="Chappie J.S."/>
            <person name="Canaves J.M."/>
            <person name="Han G.W."/>
            <person name="Rife C.L."/>
            <person name="Xu Q."/>
            <person name="Stevens R.C."/>
        </authorList>
    </citation>
    <scope>X-RAY CRYSTALLOGRAPHY (1.75 ANGSTROMS) IN COMPLEX WITH PHOSPHATE</scope>
</reference>